<feature type="initiator methionine" description="Removed" evidence="4">
    <location>
        <position position="1"/>
    </location>
</feature>
<feature type="chain" id="PRO_0000084573" description="Transitional endoplasmic reticulum ATPase">
    <location>
        <begin position="2"/>
        <end position="806"/>
    </location>
</feature>
<feature type="region of interest" description="Disordered" evidence="5">
    <location>
        <begin position="708"/>
        <end position="727"/>
    </location>
</feature>
<feature type="region of interest" description="Disordered" evidence="5">
    <location>
        <begin position="768"/>
        <end position="806"/>
    </location>
</feature>
<feature type="region of interest" description="Interaction with UBXN6" evidence="1">
    <location>
        <begin position="797"/>
        <end position="806"/>
    </location>
</feature>
<feature type="short sequence motif" description="PIM motif" evidence="4">
    <location>
        <begin position="802"/>
        <end position="806"/>
    </location>
</feature>
<feature type="compositionally biased region" description="Gly residues" evidence="5">
    <location>
        <begin position="777"/>
        <end position="793"/>
    </location>
</feature>
<feature type="binding site" evidence="21 22">
    <location>
        <begin position="247"/>
        <end position="253"/>
    </location>
    <ligand>
        <name>ATP</name>
        <dbReference type="ChEBI" id="CHEBI:30616"/>
        <label>1</label>
    </ligand>
</feature>
<feature type="binding site" evidence="4">
    <location>
        <position position="348"/>
    </location>
    <ligand>
        <name>ATP</name>
        <dbReference type="ChEBI" id="CHEBI:30616"/>
        <label>1</label>
    </ligand>
</feature>
<feature type="binding site" evidence="21 22">
    <location>
        <position position="384"/>
    </location>
    <ligand>
        <name>ATP</name>
        <dbReference type="ChEBI" id="CHEBI:30616"/>
        <label>1</label>
    </ligand>
</feature>
<feature type="binding site" evidence="21 22">
    <location>
        <begin position="521"/>
        <end position="526"/>
    </location>
    <ligand>
        <name>ATP</name>
        <dbReference type="ChEBI" id="CHEBI:30616"/>
        <label>2</label>
    </ligand>
</feature>
<feature type="modified residue" description="N-acetylalanine" evidence="4">
    <location>
        <position position="2"/>
    </location>
</feature>
<feature type="modified residue" description="Phosphoserine" evidence="4">
    <location>
        <position position="3"/>
    </location>
</feature>
<feature type="modified residue" description="Phosphoserine" evidence="4">
    <location>
        <position position="7"/>
    </location>
</feature>
<feature type="modified residue" description="Phosphoserine" evidence="4">
    <location>
        <position position="13"/>
    </location>
</feature>
<feature type="modified residue" description="Phosphoserine" evidence="4">
    <location>
        <position position="37"/>
    </location>
</feature>
<feature type="modified residue" description="N6,N6,N6-trimethyllysine; by VCPKMT" evidence="13">
    <location>
        <position position="315"/>
    </location>
</feature>
<feature type="modified residue" description="Phosphothreonine" evidence="4">
    <location>
        <position position="436"/>
    </location>
</feature>
<feature type="modified residue" description="Phosphoserine" evidence="4">
    <location>
        <position position="462"/>
    </location>
</feature>
<feature type="modified residue" description="N6-acetyllysine" evidence="26">
    <location>
        <position position="502"/>
    </location>
</feature>
<feature type="modified residue" description="N6-acetyllysine" evidence="26">
    <location>
        <position position="505"/>
    </location>
</feature>
<feature type="modified residue" description="N6-acetyllysine; alternate" evidence="26">
    <location>
        <position position="668"/>
    </location>
</feature>
<feature type="modified residue" description="N6-succinyllysine; alternate" evidence="26">
    <location>
        <position position="668"/>
    </location>
</feature>
<feature type="modified residue" description="Phosphoserine" evidence="4">
    <location>
        <position position="702"/>
    </location>
</feature>
<feature type="modified residue" description="N6-acetyllysine" evidence="26">
    <location>
        <position position="754"/>
    </location>
</feature>
<feature type="modified residue" description="Phosphoserine" evidence="25">
    <location>
        <position position="770"/>
    </location>
</feature>
<feature type="modified residue" description="Phosphoserine" evidence="4">
    <location>
        <position position="775"/>
    </location>
</feature>
<feature type="modified residue" description="Phosphoserine" evidence="4">
    <location>
        <position position="787"/>
    </location>
</feature>
<feature type="modified residue" description="Phosphotyrosine" evidence="24">
    <location>
        <position position="805"/>
    </location>
</feature>
<feature type="cross-link" description="Glycyl lysine isopeptide (Lys-Gly) (interchain with G-Cter in SUMO2)" evidence="4">
    <location>
        <position position="8"/>
    </location>
</feature>
<feature type="cross-link" description="Glycyl lysine isopeptide (Lys-Gly) (interchain with G-Cter in SUMO2)" evidence="4">
    <location>
        <position position="18"/>
    </location>
</feature>
<feature type="mutagenesis site" description="Loss of phospholipid-binding." evidence="11">
    <original>R</original>
    <variation>A</variation>
    <location>
        <position position="144"/>
    </location>
</feature>
<feature type="sequence conflict" description="In Ref. 2; BAC27119." evidence="20" ref="2">
    <original>S</original>
    <variation>Y</variation>
    <location>
        <position position="73"/>
    </location>
</feature>
<feature type="sequence conflict" description="In Ref. 2; BAE39824." evidence="20" ref="2">
    <original>N</original>
    <variation>Y</variation>
    <location>
        <position position="199"/>
    </location>
</feature>
<feature type="sequence conflict" description="In Ref. 1; CAA78412." evidence="20" ref="1">
    <original>I</original>
    <variation>V</variation>
    <location>
        <position position="206"/>
    </location>
</feature>
<feature type="sequence conflict" description="In Ref. 2; BAC27119." evidence="20" ref="2">
    <original>R</original>
    <variation>Q</variation>
    <location>
        <position position="359"/>
    </location>
</feature>
<feature type="sequence conflict" description="In Ref. 2; BAE40919." evidence="20" ref="2">
    <original>A</original>
    <variation>T</variation>
    <location>
        <position position="439"/>
    </location>
</feature>
<feature type="sequence conflict" description="In Ref. 2; BAE34876." evidence="20" ref="2">
    <original>N</original>
    <variation>S</variation>
    <location>
        <position position="624"/>
    </location>
</feature>
<feature type="sequence conflict" description="In Ref. 2; BAC25849." evidence="20" ref="2">
    <original>G</original>
    <variation>V</variation>
    <location>
        <position position="684"/>
    </location>
</feature>
<feature type="strand" evidence="27">
    <location>
        <begin position="25"/>
        <end position="29"/>
    </location>
</feature>
<feature type="strand" evidence="27">
    <location>
        <begin position="38"/>
        <end position="41"/>
    </location>
</feature>
<feature type="helix" evidence="27">
    <location>
        <begin position="43"/>
        <end position="48"/>
    </location>
</feature>
<feature type="strand" evidence="27">
    <location>
        <begin position="56"/>
        <end position="60"/>
    </location>
</feature>
<feature type="helix" evidence="31">
    <location>
        <begin position="62"/>
        <end position="64"/>
    </location>
</feature>
<feature type="strand" evidence="27">
    <location>
        <begin position="66"/>
        <end position="73"/>
    </location>
</feature>
<feature type="strand" evidence="28">
    <location>
        <begin position="75"/>
        <end position="77"/>
    </location>
</feature>
<feature type="strand" evidence="27">
    <location>
        <begin position="79"/>
        <end position="83"/>
    </location>
</feature>
<feature type="helix" evidence="27">
    <location>
        <begin position="86"/>
        <end position="91"/>
    </location>
</feature>
<feature type="strand" evidence="27">
    <location>
        <begin position="99"/>
        <end position="104"/>
    </location>
</feature>
<feature type="strand" evidence="29">
    <location>
        <begin position="106"/>
        <end position="110"/>
    </location>
</feature>
<feature type="strand" evidence="27">
    <location>
        <begin position="114"/>
        <end position="119"/>
    </location>
</feature>
<feature type="helix" evidence="27">
    <location>
        <begin position="120"/>
        <end position="122"/>
    </location>
</feature>
<feature type="turn" evidence="27">
    <location>
        <begin position="123"/>
        <end position="125"/>
    </location>
</feature>
<feature type="helix" evidence="27">
    <location>
        <begin position="130"/>
        <end position="133"/>
    </location>
</feature>
<feature type="helix" evidence="27">
    <location>
        <begin position="135"/>
        <end position="139"/>
    </location>
</feature>
<feature type="turn" evidence="28">
    <location>
        <begin position="140"/>
        <end position="142"/>
    </location>
</feature>
<feature type="strand" evidence="27">
    <location>
        <begin position="144"/>
        <end position="147"/>
    </location>
</feature>
<feature type="strand" evidence="27">
    <location>
        <begin position="151"/>
        <end position="156"/>
    </location>
</feature>
<feature type="strand" evidence="27">
    <location>
        <begin position="159"/>
        <end position="176"/>
    </location>
</feature>
<feature type="strand" evidence="28">
    <location>
        <begin position="181"/>
        <end position="183"/>
    </location>
</feature>
<feature type="strand" evidence="29">
    <location>
        <begin position="193"/>
        <end position="195"/>
    </location>
</feature>
<feature type="strand" evidence="31">
    <location>
        <begin position="198"/>
        <end position="200"/>
    </location>
</feature>
<feature type="helix" evidence="27">
    <location>
        <begin position="203"/>
        <end position="205"/>
    </location>
</feature>
<feature type="helix" evidence="27">
    <location>
        <begin position="211"/>
        <end position="225"/>
    </location>
</feature>
<feature type="helix" evidence="27">
    <location>
        <begin position="227"/>
        <end position="232"/>
    </location>
</feature>
<feature type="strand" evidence="27">
    <location>
        <begin position="240"/>
        <end position="244"/>
    </location>
</feature>
<feature type="helix" evidence="27">
    <location>
        <begin position="251"/>
        <end position="261"/>
    </location>
</feature>
<feature type="strand" evidence="27">
    <location>
        <begin position="265"/>
        <end position="269"/>
    </location>
</feature>
<feature type="helix" evidence="27">
    <location>
        <begin position="271"/>
        <end position="274"/>
    </location>
</feature>
<feature type="helix" evidence="27">
    <location>
        <begin position="281"/>
        <end position="295"/>
    </location>
</feature>
<feature type="strand" evidence="27">
    <location>
        <begin position="298"/>
        <end position="305"/>
    </location>
</feature>
<feature type="helix" evidence="27">
    <location>
        <begin position="306"/>
        <end position="308"/>
    </location>
</feature>
<feature type="helix" evidence="27">
    <location>
        <begin position="312"/>
        <end position="315"/>
    </location>
</feature>
<feature type="helix" evidence="27">
    <location>
        <begin position="321"/>
        <end position="333"/>
    </location>
</feature>
<feature type="helix" evidence="28">
    <location>
        <begin position="337"/>
        <end position="339"/>
    </location>
</feature>
<feature type="strand" evidence="27">
    <location>
        <begin position="341"/>
        <end position="348"/>
    </location>
</feature>
<feature type="helix" evidence="27">
    <location>
        <begin position="350"/>
        <end position="352"/>
    </location>
</feature>
<feature type="helix" evidence="27">
    <location>
        <begin position="355"/>
        <end position="357"/>
    </location>
</feature>
<feature type="strand" evidence="27">
    <location>
        <begin position="365"/>
        <end position="368"/>
    </location>
</feature>
<feature type="helix" evidence="27">
    <location>
        <begin position="374"/>
        <end position="383"/>
    </location>
</feature>
<feature type="turn" evidence="27">
    <location>
        <begin position="384"/>
        <end position="387"/>
    </location>
</feature>
<feature type="strand" evidence="28">
    <location>
        <begin position="388"/>
        <end position="390"/>
    </location>
</feature>
<feature type="helix" evidence="27">
    <location>
        <begin position="396"/>
        <end position="402"/>
    </location>
</feature>
<feature type="helix" evidence="27">
    <location>
        <begin position="408"/>
        <end position="430"/>
    </location>
</feature>
<feature type="helix" evidence="27">
    <location>
        <begin position="439"/>
        <end position="444"/>
    </location>
</feature>
<feature type="helix" evidence="27">
    <location>
        <begin position="449"/>
        <end position="456"/>
    </location>
</feature>
<feature type="strand" evidence="31">
    <location>
        <begin position="457"/>
        <end position="460"/>
    </location>
</feature>
<feature type="helix" evidence="30">
    <location>
        <begin position="476"/>
        <end position="478"/>
    </location>
</feature>
<feature type="helix" evidence="30">
    <location>
        <begin position="483"/>
        <end position="498"/>
    </location>
</feature>
<feature type="helix" evidence="30">
    <location>
        <begin position="500"/>
        <end position="506"/>
    </location>
</feature>
<feature type="strand" evidence="30">
    <location>
        <begin position="512"/>
        <end position="517"/>
    </location>
</feature>
<feature type="strand" evidence="30">
    <location>
        <begin position="519"/>
        <end position="523"/>
    </location>
</feature>
<feature type="helix" evidence="30">
    <location>
        <begin position="524"/>
        <end position="534"/>
    </location>
</feature>
<feature type="strand" evidence="30">
    <location>
        <begin position="538"/>
        <end position="542"/>
    </location>
</feature>
<feature type="helix" evidence="30">
    <location>
        <begin position="544"/>
        <end position="552"/>
    </location>
</feature>
<feature type="helix" evidence="30">
    <location>
        <begin position="558"/>
        <end position="568"/>
    </location>
</feature>
<feature type="strand" evidence="30">
    <location>
        <begin position="571"/>
        <end position="576"/>
    </location>
</feature>
<feature type="helix" evidence="30">
    <location>
        <begin position="581"/>
        <end position="585"/>
    </location>
</feature>
<feature type="turn" evidence="30">
    <location>
        <begin position="586"/>
        <end position="590"/>
    </location>
</feature>
<feature type="helix" evidence="30">
    <location>
        <begin position="599"/>
        <end position="609"/>
    </location>
</feature>
<feature type="strand" evidence="30">
    <location>
        <begin position="615"/>
        <end position="624"/>
    </location>
</feature>
<feature type="helix" evidence="30">
    <location>
        <begin position="626"/>
        <end position="628"/>
    </location>
</feature>
<feature type="helix" evidence="30">
    <location>
        <begin position="631"/>
        <end position="634"/>
    </location>
</feature>
<feature type="turn" evidence="31">
    <location>
        <begin position="636"/>
        <end position="638"/>
    </location>
</feature>
<feature type="strand" evidence="30">
    <location>
        <begin position="641"/>
        <end position="644"/>
    </location>
</feature>
<feature type="helix" evidence="30">
    <location>
        <begin position="650"/>
        <end position="661"/>
    </location>
</feature>
<feature type="helix" evidence="30">
    <location>
        <begin position="672"/>
        <end position="677"/>
    </location>
</feature>
<feature type="helix" evidence="30">
    <location>
        <begin position="684"/>
        <end position="706"/>
    </location>
</feature>
<feature type="helix" evidence="30">
    <location>
        <begin position="733"/>
        <end position="740"/>
    </location>
</feature>
<feature type="helix" evidence="30">
    <location>
        <begin position="749"/>
        <end position="762"/>
    </location>
</feature>
<gene>
    <name evidence="23" type="primary">Vcp</name>
</gene>
<keyword id="KW-0002">3D-structure</keyword>
<keyword id="KW-0007">Acetylation</keyword>
<keyword id="KW-0067">ATP-binding</keyword>
<keyword id="KW-0072">Autophagy</keyword>
<keyword id="KW-0963">Cytoplasm</keyword>
<keyword id="KW-0903">Direct protein sequencing</keyword>
<keyword id="KW-0227">DNA damage</keyword>
<keyword id="KW-0234">DNA repair</keyword>
<keyword id="KW-0256">Endoplasmic reticulum</keyword>
<keyword id="KW-0378">Hydrolase</keyword>
<keyword id="KW-1017">Isopeptide bond</keyword>
<keyword id="KW-0446">Lipid-binding</keyword>
<keyword id="KW-0488">Methylation</keyword>
<keyword id="KW-0547">Nucleotide-binding</keyword>
<keyword id="KW-0539">Nucleus</keyword>
<keyword id="KW-0597">Phosphoprotein</keyword>
<keyword id="KW-1185">Reference proteome</keyword>
<keyword id="KW-0813">Transport</keyword>
<keyword id="KW-0832">Ubl conjugation</keyword>
<keyword id="KW-0833">Ubl conjugation pathway</keyword>
<reference key="1">
    <citation type="journal article" date="1992" name="EMBO J.">
        <title>VCP, the mammalian homolog of cdc48, is tyrosine phosphorylated in response to T cell antigen receptor activation.</title>
        <authorList>
            <person name="Egerton M."/>
            <person name="Ashe O.R."/>
            <person name="Chen D."/>
            <person name="Druker B.J."/>
            <person name="Burgess W.H."/>
            <person name="Samelson L.E."/>
        </authorList>
    </citation>
    <scope>NUCLEOTIDE SEQUENCE [MRNA]</scope>
    <scope>PROTEIN SEQUENCE OF 20-40; 295-309 AND 425-438</scope>
    <source>
        <strain>MRL/LPR</strain>
    </source>
</reference>
<reference key="2">
    <citation type="journal article" date="2005" name="Science">
        <title>The transcriptional landscape of the mammalian genome.</title>
        <authorList>
            <person name="Carninci P."/>
            <person name="Kasukawa T."/>
            <person name="Katayama S."/>
            <person name="Gough J."/>
            <person name="Frith M.C."/>
            <person name="Maeda N."/>
            <person name="Oyama R."/>
            <person name="Ravasi T."/>
            <person name="Lenhard B."/>
            <person name="Wells C."/>
            <person name="Kodzius R."/>
            <person name="Shimokawa K."/>
            <person name="Bajic V.B."/>
            <person name="Brenner S.E."/>
            <person name="Batalov S."/>
            <person name="Forrest A.R."/>
            <person name="Zavolan M."/>
            <person name="Davis M.J."/>
            <person name="Wilming L.G."/>
            <person name="Aidinis V."/>
            <person name="Allen J.E."/>
            <person name="Ambesi-Impiombato A."/>
            <person name="Apweiler R."/>
            <person name="Aturaliya R.N."/>
            <person name="Bailey T.L."/>
            <person name="Bansal M."/>
            <person name="Baxter L."/>
            <person name="Beisel K.W."/>
            <person name="Bersano T."/>
            <person name="Bono H."/>
            <person name="Chalk A.M."/>
            <person name="Chiu K.P."/>
            <person name="Choudhary V."/>
            <person name="Christoffels A."/>
            <person name="Clutterbuck D.R."/>
            <person name="Crowe M.L."/>
            <person name="Dalla E."/>
            <person name="Dalrymple B.P."/>
            <person name="de Bono B."/>
            <person name="Della Gatta G."/>
            <person name="di Bernardo D."/>
            <person name="Down T."/>
            <person name="Engstrom P."/>
            <person name="Fagiolini M."/>
            <person name="Faulkner G."/>
            <person name="Fletcher C.F."/>
            <person name="Fukushima T."/>
            <person name="Furuno M."/>
            <person name="Futaki S."/>
            <person name="Gariboldi M."/>
            <person name="Georgii-Hemming P."/>
            <person name="Gingeras T.R."/>
            <person name="Gojobori T."/>
            <person name="Green R.E."/>
            <person name="Gustincich S."/>
            <person name="Harbers M."/>
            <person name="Hayashi Y."/>
            <person name="Hensch T.K."/>
            <person name="Hirokawa N."/>
            <person name="Hill D."/>
            <person name="Huminiecki L."/>
            <person name="Iacono M."/>
            <person name="Ikeo K."/>
            <person name="Iwama A."/>
            <person name="Ishikawa T."/>
            <person name="Jakt M."/>
            <person name="Kanapin A."/>
            <person name="Katoh M."/>
            <person name="Kawasawa Y."/>
            <person name="Kelso J."/>
            <person name="Kitamura H."/>
            <person name="Kitano H."/>
            <person name="Kollias G."/>
            <person name="Krishnan S.P."/>
            <person name="Kruger A."/>
            <person name="Kummerfeld S.K."/>
            <person name="Kurochkin I.V."/>
            <person name="Lareau L.F."/>
            <person name="Lazarevic D."/>
            <person name="Lipovich L."/>
            <person name="Liu J."/>
            <person name="Liuni S."/>
            <person name="McWilliam S."/>
            <person name="Madan Babu M."/>
            <person name="Madera M."/>
            <person name="Marchionni L."/>
            <person name="Matsuda H."/>
            <person name="Matsuzawa S."/>
            <person name="Miki H."/>
            <person name="Mignone F."/>
            <person name="Miyake S."/>
            <person name="Morris K."/>
            <person name="Mottagui-Tabar S."/>
            <person name="Mulder N."/>
            <person name="Nakano N."/>
            <person name="Nakauchi H."/>
            <person name="Ng P."/>
            <person name="Nilsson R."/>
            <person name="Nishiguchi S."/>
            <person name="Nishikawa S."/>
            <person name="Nori F."/>
            <person name="Ohara O."/>
            <person name="Okazaki Y."/>
            <person name="Orlando V."/>
            <person name="Pang K.C."/>
            <person name="Pavan W.J."/>
            <person name="Pavesi G."/>
            <person name="Pesole G."/>
            <person name="Petrovsky N."/>
            <person name="Piazza S."/>
            <person name="Reed J."/>
            <person name="Reid J.F."/>
            <person name="Ring B.Z."/>
            <person name="Ringwald M."/>
            <person name="Rost B."/>
            <person name="Ruan Y."/>
            <person name="Salzberg S.L."/>
            <person name="Sandelin A."/>
            <person name="Schneider C."/>
            <person name="Schoenbach C."/>
            <person name="Sekiguchi K."/>
            <person name="Semple C.A."/>
            <person name="Seno S."/>
            <person name="Sessa L."/>
            <person name="Sheng Y."/>
            <person name="Shibata Y."/>
            <person name="Shimada H."/>
            <person name="Shimada K."/>
            <person name="Silva D."/>
            <person name="Sinclair B."/>
            <person name="Sperling S."/>
            <person name="Stupka E."/>
            <person name="Sugiura K."/>
            <person name="Sultana R."/>
            <person name="Takenaka Y."/>
            <person name="Taki K."/>
            <person name="Tammoja K."/>
            <person name="Tan S.L."/>
            <person name="Tang S."/>
            <person name="Taylor M.S."/>
            <person name="Tegner J."/>
            <person name="Teichmann S.A."/>
            <person name="Ueda H.R."/>
            <person name="van Nimwegen E."/>
            <person name="Verardo R."/>
            <person name="Wei C.L."/>
            <person name="Yagi K."/>
            <person name="Yamanishi H."/>
            <person name="Zabarovsky E."/>
            <person name="Zhu S."/>
            <person name="Zimmer A."/>
            <person name="Hide W."/>
            <person name="Bult C."/>
            <person name="Grimmond S.M."/>
            <person name="Teasdale R.D."/>
            <person name="Liu E.T."/>
            <person name="Brusic V."/>
            <person name="Quackenbush J."/>
            <person name="Wahlestedt C."/>
            <person name="Mattick J.S."/>
            <person name="Hume D.A."/>
            <person name="Kai C."/>
            <person name="Sasaki D."/>
            <person name="Tomaru Y."/>
            <person name="Fukuda S."/>
            <person name="Kanamori-Katayama M."/>
            <person name="Suzuki M."/>
            <person name="Aoki J."/>
            <person name="Arakawa T."/>
            <person name="Iida J."/>
            <person name="Imamura K."/>
            <person name="Itoh M."/>
            <person name="Kato T."/>
            <person name="Kawaji H."/>
            <person name="Kawagashira N."/>
            <person name="Kawashima T."/>
            <person name="Kojima M."/>
            <person name="Kondo S."/>
            <person name="Konno H."/>
            <person name="Nakano K."/>
            <person name="Ninomiya N."/>
            <person name="Nishio T."/>
            <person name="Okada M."/>
            <person name="Plessy C."/>
            <person name="Shibata K."/>
            <person name="Shiraki T."/>
            <person name="Suzuki S."/>
            <person name="Tagami M."/>
            <person name="Waki K."/>
            <person name="Watahiki A."/>
            <person name="Okamura-Oho Y."/>
            <person name="Suzuki H."/>
            <person name="Kawai J."/>
            <person name="Hayashizaki Y."/>
        </authorList>
    </citation>
    <scope>NUCLEOTIDE SEQUENCE [LARGE SCALE MRNA]</scope>
    <source>
        <strain>BALB/cJ</strain>
        <strain>C57BL/6J</strain>
        <tissue>Bone marrow</tissue>
        <tissue>Head</tissue>
        <tissue>Kidney</tissue>
    </source>
</reference>
<reference key="3">
    <citation type="journal article" date="2009" name="PLoS Biol.">
        <title>Lineage-specific biology revealed by a finished genome assembly of the mouse.</title>
        <authorList>
            <person name="Church D.M."/>
            <person name="Goodstadt L."/>
            <person name="Hillier L.W."/>
            <person name="Zody M.C."/>
            <person name="Goldstein S."/>
            <person name="She X."/>
            <person name="Bult C.J."/>
            <person name="Agarwala R."/>
            <person name="Cherry J.L."/>
            <person name="DiCuccio M."/>
            <person name="Hlavina W."/>
            <person name="Kapustin Y."/>
            <person name="Meric P."/>
            <person name="Maglott D."/>
            <person name="Birtle Z."/>
            <person name="Marques A.C."/>
            <person name="Graves T."/>
            <person name="Zhou S."/>
            <person name="Teague B."/>
            <person name="Potamousis K."/>
            <person name="Churas C."/>
            <person name="Place M."/>
            <person name="Herschleb J."/>
            <person name="Runnheim R."/>
            <person name="Forrest D."/>
            <person name="Amos-Landgraf J."/>
            <person name="Schwartz D.C."/>
            <person name="Cheng Z."/>
            <person name="Lindblad-Toh K."/>
            <person name="Eichler E.E."/>
            <person name="Ponting C.P."/>
        </authorList>
    </citation>
    <scope>NUCLEOTIDE SEQUENCE [LARGE SCALE GENOMIC DNA]</scope>
    <source>
        <strain>C57BL/6J</strain>
    </source>
</reference>
<reference key="4">
    <citation type="journal article" date="2004" name="Genome Res.">
        <title>The status, quality, and expansion of the NIH full-length cDNA project: the Mammalian Gene Collection (MGC).</title>
        <authorList>
            <consortium name="The MGC Project Team"/>
        </authorList>
    </citation>
    <scope>NUCLEOTIDE SEQUENCE [LARGE SCALE MRNA]</scope>
    <source>
        <strain>C57BL/6J</strain>
        <tissue>Brain</tissue>
    </source>
</reference>
<reference key="5">
    <citation type="submission" date="2007-07" db="UniProtKB">
        <authorList>
            <person name="Lubec G."/>
            <person name="Kang S.U."/>
            <person name="Klug S."/>
            <person name="Yang J.W."/>
            <person name="Zigmond M."/>
        </authorList>
    </citation>
    <scope>PROTEIN SEQUENCE OF 9-18; 26-53; 87-93; 96-109; 148-155; 192-210; 218-231; 240-251; 278-287; 296-312; 324-336; 363-386; 454-502; 513-524; 530-560; 600-614; 639-651; 669-677; 701-709; 714-732 AND 754-766</scope>
    <scope>IDENTIFICATION BY MASS SPECTROMETRY</scope>
    <source>
        <strain>C57BL/6J</strain>
        <tissue>Brain</tissue>
        <tissue>Hippocampus</tissue>
    </source>
</reference>
<reference key="6">
    <citation type="journal article" date="2004" name="Genes Cells">
        <title>Interaction of U-box-type ubiquitin-protein ligases (E3s) with molecular chaperones.</title>
        <authorList>
            <person name="Hatakeyama S."/>
            <person name="Matsumoto M."/>
            <person name="Yada M."/>
            <person name="Nakayama K.I."/>
        </authorList>
    </citation>
    <scope>INTERACTION WITH UBOX5</scope>
</reference>
<reference key="7">
    <citation type="journal article" date="2004" name="J. Biol. Chem.">
        <title>Physical and functional interaction between dorfin and valosin-containing protein that are colocalized in ubiquitylated inclusions in neurodegenerative disorders.</title>
        <authorList>
            <person name="Ishigaki S."/>
            <person name="Hishikawa N."/>
            <person name="Niwa J."/>
            <person name="Iemura S."/>
            <person name="Natsume T."/>
            <person name="Hori S."/>
            <person name="Kakizuka A."/>
            <person name="Tanaka K."/>
            <person name="Sobue G."/>
        </authorList>
    </citation>
    <scope>INTERACTION WITH RNF19A</scope>
</reference>
<reference key="8">
    <citation type="journal article" date="2005" name="Biochem. Biophys. Res. Commun.">
        <title>Proteomic identification of proteins conjugated to ISG15 in mouse and human cells.</title>
        <authorList>
            <person name="Giannakopoulos N.V."/>
            <person name="Luo J.K."/>
            <person name="Papov V."/>
            <person name="Zou W."/>
            <person name="Lenschow D.J."/>
            <person name="Jacobs B.S."/>
            <person name="Borden E.C."/>
            <person name="Li J."/>
            <person name="Virgin H.W."/>
            <person name="Zhang D.E."/>
        </authorList>
    </citation>
    <scope>ISGYLATION</scope>
</reference>
<reference key="9">
    <citation type="journal article" date="2005" name="Nat. Biotechnol.">
        <title>Immunoaffinity profiling of tyrosine phosphorylation in cancer cells.</title>
        <authorList>
            <person name="Rush J."/>
            <person name="Moritz A."/>
            <person name="Lee K.A."/>
            <person name="Guo A."/>
            <person name="Goss V.L."/>
            <person name="Spek E.J."/>
            <person name="Zhang H."/>
            <person name="Zha X.-M."/>
            <person name="Polakiewicz R.D."/>
            <person name="Comb M.J."/>
        </authorList>
    </citation>
    <scope>PHOSPHORYLATION [LARGE SCALE ANALYSIS] AT TYR-805</scope>
    <scope>IDENTIFICATION BY MASS SPECTROMETRY [LARGE SCALE ANALYSIS]</scope>
</reference>
<reference key="10">
    <citation type="journal article" date="2005" name="Proc. Natl. Acad. Sci. U.S.A.">
        <title>Multiple modes of interaction of the deglycosylation enzyme, mouse peptide N-glycanase, with the proteasome.</title>
        <authorList>
            <person name="Li G."/>
            <person name="Zhou X."/>
            <person name="Zhao G."/>
            <person name="Schindelin H."/>
            <person name="Lennarz W.J."/>
        </authorList>
    </citation>
    <scope>INTERACTION WITH NGLY1</scope>
</reference>
<reference key="11">
    <citation type="journal article" date="2006" name="Proc. Natl. Acad. Sci. U.S.A.">
        <authorList>
            <person name="Li G."/>
            <person name="Zhou X."/>
            <person name="Zhao G."/>
            <person name="Schindelin H."/>
            <person name="Lennarz W.J."/>
        </authorList>
    </citation>
    <scope>ERRATUM OF PUBMED:16249333</scope>
</reference>
<reference key="12">
    <citation type="journal article" date="2006" name="Dev. Cell">
        <title>p37 is a p97 adaptor required for Golgi and ER biogenesis in interphase and at the end of mitosis.</title>
        <authorList>
            <person name="Uchiyama K."/>
            <person name="Totsukawa G."/>
            <person name="Puhka M."/>
            <person name="Kaneko Y."/>
            <person name="Jokitalo E."/>
            <person name="Dreveny I."/>
            <person name="Beuron F."/>
            <person name="Zhang X."/>
            <person name="Freemont P."/>
            <person name="Kondo H."/>
        </authorList>
    </citation>
    <scope>INTERACTION WITH NSFL1C-LIKE PROTEIN P37</scope>
</reference>
<reference key="13">
    <citation type="journal article" date="2006" name="FEBS J.">
        <title>The common phospholipid-binding activity of the N-terminal domains of PEX1 and VCP/p97.</title>
        <authorList>
            <person name="Shiozawa K."/>
            <person name="Goda N."/>
            <person name="Shimizu T."/>
            <person name="Mizuguchi K."/>
            <person name="Kondo N."/>
            <person name="Shimozawa N."/>
            <person name="Shirakawa M."/>
            <person name="Hiroaki H."/>
        </authorList>
    </citation>
    <scope>PHOSPHOLIPID BINDING</scope>
    <scope>MUTAGENESIS OF ARG-144</scope>
</reference>
<reference key="14">
    <citation type="journal article" date="2006" name="Proc. Natl. Acad. Sci. U.S.A.">
        <title>The AAA ATPase p97 links peptide N-glycanase to the endoplasmic reticulum-associated E3 ligase autocrine motility factor receptor.</title>
        <authorList>
            <person name="Li G."/>
            <person name="Zhao G."/>
            <person name="Zhou X."/>
            <person name="Schindelin H."/>
            <person name="Lennarz W.J."/>
        </authorList>
    </citation>
    <scope>INTERACTION WITH AMFR; SAKS1; RAD23B AND NGLY1</scope>
</reference>
<reference key="15">
    <citation type="journal article" date="2010" name="Cell">
        <title>A tissue-specific atlas of mouse protein phosphorylation and expression.</title>
        <authorList>
            <person name="Huttlin E.L."/>
            <person name="Jedrychowski M.P."/>
            <person name="Elias J.E."/>
            <person name="Goswami T."/>
            <person name="Rad R."/>
            <person name="Beausoleil S.A."/>
            <person name="Villen J."/>
            <person name="Haas W."/>
            <person name="Sowa M.E."/>
            <person name="Gygi S.P."/>
        </authorList>
    </citation>
    <scope>PHOSPHORYLATION [LARGE SCALE ANALYSIS] AT SER-770</scope>
    <scope>IDENTIFICATION BY MASS SPECTROMETRY [LARGE SCALE ANALYSIS]</scope>
    <source>
        <tissue>Brain</tissue>
        <tissue>Brown adipose tissue</tissue>
        <tissue>Heart</tissue>
        <tissue>Kidney</tissue>
        <tissue>Liver</tissue>
        <tissue>Lung</tissue>
        <tissue>Pancreas</tissue>
        <tissue>Spleen</tissue>
        <tissue>Testis</tissue>
    </source>
</reference>
<reference key="16">
    <citation type="journal article" date="2012" name="Nat. Commun.">
        <title>Lysine methylation of VCP by a member of a novel human protein methyltransferase family.</title>
        <authorList>
            <person name="Kernstock S."/>
            <person name="Davydova E."/>
            <person name="Jakobsson M."/>
            <person name="Moen A."/>
            <person name="Pettersen S."/>
            <person name="Maelandsmo G.M."/>
            <person name="Egge-Jacobsen W."/>
            <person name="Falnes P.O."/>
        </authorList>
    </citation>
    <scope>METHYLATION AT LYS-315</scope>
</reference>
<reference key="17">
    <citation type="journal article" date="2013" name="Mol. Cell">
        <title>SIRT5-mediated lysine desuccinylation impacts diverse metabolic pathways.</title>
        <authorList>
            <person name="Park J."/>
            <person name="Chen Y."/>
            <person name="Tishkoff D.X."/>
            <person name="Peng C."/>
            <person name="Tan M."/>
            <person name="Dai L."/>
            <person name="Xie Z."/>
            <person name="Zhang Y."/>
            <person name="Zwaans B.M."/>
            <person name="Skinner M.E."/>
            <person name="Lombard D.B."/>
            <person name="Zhao Y."/>
        </authorList>
    </citation>
    <scope>ACETYLATION [LARGE SCALE ANALYSIS] AT LYS-502; LYS-505; LYS-668 AND LYS-754</scope>
    <scope>SUCCINYLATION [LARGE SCALE ANALYSIS] AT LYS-668</scope>
    <scope>IDENTIFICATION BY MASS SPECTROMETRY [LARGE SCALE ANALYSIS]</scope>
    <source>
        <tissue>Embryonic fibroblast</tissue>
    </source>
</reference>
<reference key="18">
    <citation type="journal article" date="2014" name="Biochem. J.">
        <title>Signal-peptide-mediated translocation is regulated by a p97-AIRAPL complex.</title>
        <authorList>
            <person name="Glinka T."/>
            <person name="Alter J."/>
            <person name="Braunstein I."/>
            <person name="Tzach L."/>
            <person name="Wei Sheng C."/>
            <person name="Geifman S."/>
            <person name="Edelmann M.J."/>
            <person name="Kessler B.M."/>
            <person name="Stanhill A."/>
        </authorList>
    </citation>
    <scope>INTERACTION WITH ZFAND2B</scope>
</reference>
<reference key="19">
    <citation type="journal article" date="2014" name="Dev. Biol.">
        <title>Contribution of calumin to embryogenesis through participation in the endoplasmic reticulum-associated degradation activity.</title>
        <authorList>
            <person name="Yamamoto S."/>
            <person name="Yamazaki T."/>
            <person name="Komazaki S."/>
            <person name="Yamashita T."/>
            <person name="Osaki M."/>
            <person name="Matsubayashi M."/>
            <person name="Kidoya H."/>
            <person name="Takakura N."/>
            <person name="Yamazaki D."/>
            <person name="Kakizawa S."/>
        </authorList>
    </citation>
    <scope>INTERACTION WITH CCDC47</scope>
</reference>
<reference key="20">
    <citation type="journal article" date="2015" name="Biochem. Pharmacol.">
        <title>UBXN2A regulates nicotinic receptor degradation by modulating the E3 ligase activity of CHIP.</title>
        <authorList>
            <person name="Teng Y."/>
            <person name="Rezvani K."/>
            <person name="De Biasi M."/>
        </authorList>
    </citation>
    <scope>TISSUE SPECIFICITY</scope>
</reference>
<reference key="21">
    <citation type="journal article" date="2015" name="Mol. Biol. Cell">
        <title>Proteasomal degradation of preemptive quality control (pQC) substrates is mediated by an AIRAPL-p97 complex.</title>
        <authorList>
            <person name="Braunstein I."/>
            <person name="Zach L."/>
            <person name="Allan S."/>
            <person name="Kalies K.U."/>
            <person name="Stanhill A."/>
        </authorList>
    </citation>
    <scope>INTERACTION WITH ZFAND2B</scope>
</reference>
<reference key="22">
    <citation type="journal article" date="2019" name="Science">
        <title>LMBR1L regulates lymphopoiesis through Wnt/beta-catenin signaling.</title>
        <authorList>
            <person name="Choi J.H."/>
            <person name="Zhong X."/>
            <person name="McAlpine W."/>
            <person name="Liao T.C."/>
            <person name="Zhang D."/>
            <person name="Fang B."/>
            <person name="Russell J."/>
            <person name="Ludwig S."/>
            <person name="Nair-Gill E."/>
            <person name="Zhang Z."/>
            <person name="Wang K.W."/>
            <person name="Misawa T."/>
            <person name="Zhan X."/>
            <person name="Choi M."/>
            <person name="Wang T."/>
            <person name="Li X."/>
            <person name="Tang M."/>
            <person name="Sun Q."/>
            <person name="Yu L."/>
            <person name="Murray A.R."/>
            <person name="Moresco E.M.Y."/>
            <person name="Beutler B."/>
        </authorList>
    </citation>
    <scope>INTERACTION WITH LMBR1L AND UBAC2</scope>
</reference>
<reference key="23">
    <citation type="journal article" date="2021" name="EMBO Rep.">
        <title>CUL2LRR1, TRAIP and p97 control CMG helicase disassembly in the mammalian cell cycle.</title>
        <authorList>
            <person name="Villa F."/>
            <person name="Fujisawa R."/>
            <person name="Ainsworth J."/>
            <person name="Nishimura K."/>
            <person name="Lie-A-Ling M."/>
            <person name="Lacaud G."/>
            <person name="Labib K.P."/>
        </authorList>
    </citation>
    <scope>FUNCTION</scope>
    <scope>SUBCELLULAR LOCATION</scope>
</reference>
<reference key="24">
    <citation type="journal article" date="2000" name="Mol. Cell">
        <title>Structure of the AAA ATPase p97.</title>
        <authorList>
            <person name="Zhang X."/>
            <person name="Shaw A."/>
            <person name="Bates P.A."/>
            <person name="Newman R.H."/>
            <person name="Gowen B."/>
            <person name="Orlova E."/>
            <person name="Gorman M.A."/>
            <person name="Kondo H."/>
            <person name="Dokurno P."/>
            <person name="Lally J."/>
            <person name="Leonard G."/>
            <person name="Meyer H."/>
            <person name="van Heel M."/>
            <person name="Freemont P.S."/>
        </authorList>
    </citation>
    <scope>X-RAY CRYSTALLOGRAPHY (2.90 ANGSTROMS) OF 1-458 IN COMPLEX WITH ADP</scope>
</reference>
<reference key="25">
    <citation type="journal article" date="2003" name="Nat. Struct. Biol.">
        <title>Complete structure of p97/valosin-containing protein reveals communication between nucleotide domains.</title>
        <authorList>
            <person name="DeLaBarre B."/>
            <person name="Brunger A.T."/>
        </authorList>
    </citation>
    <scope>X-RAY CRYSTALLOGRAPHY (4.7 ANGSTROMS)</scope>
</reference>
<reference key="26">
    <citation type="journal article" date="2003" name="J. Struct. Biol.">
        <title>The crystal structure of murine p97/VCP at 3.6A.</title>
        <authorList>
            <person name="Huyton T."/>
            <person name="Pye V.E."/>
            <person name="Briggs L.C."/>
            <person name="Flynn T.C."/>
            <person name="Beuron F."/>
            <person name="Kondo H."/>
            <person name="Ma J."/>
            <person name="Zhang X."/>
            <person name="Freemont P.S."/>
        </authorList>
    </citation>
    <scope>X-RAY CRYSTALLOGRAPHY (3.6 ANGSTROMS)</scope>
</reference>
<reference key="27">
    <citation type="journal article" date="2004" name="EMBO J.">
        <title>Structural basis of the interaction between the AAA ATPase p97/VCP and its adaptor protein p47.</title>
        <authorList>
            <person name="Dreveny I."/>
            <person name="Kondo H."/>
            <person name="Uchiyama K."/>
            <person name="Shaw A."/>
            <person name="Zhang X."/>
            <person name="Freemont P.S."/>
        </authorList>
    </citation>
    <scope>X-RAY CRYSTALLOGRAPHY (2.90 ANGSTROMS) OF 1-458 IN COMPLEX WITH ADP</scope>
</reference>
<reference key="28">
    <citation type="journal article" date="2005" name="J. Mol. Biol.">
        <title>Nucleotide dependent motion and mechanism of action of p97/VCP.</title>
        <authorList>
            <person name="DeLaBarre B."/>
            <person name="Brunger A.T."/>
        </authorList>
    </citation>
    <scope>X-RAY CRYSTALLOGRAPHY (3.5 ANGSTROMS)</scope>
</reference>
<proteinExistence type="evidence at protein level"/>
<accession>Q01853</accession>
<accession>Q3TFH9</accession>
<accession>Q3TIM2</accession>
<accession>Q3TXN9</accession>
<accession>Q6PI18</accession>
<accession>Q8BSR6</accession>
<accession>Q8CEG4</accession>
<protein>
    <recommendedName>
        <fullName>Transitional endoplasmic reticulum ATPase</fullName>
        <shortName>TER ATPase</shortName>
        <ecNumber evidence="4">3.6.4.6</ecNumber>
    </recommendedName>
    <alternativeName>
        <fullName>15S Mg(2+)-ATPase p97 subunit</fullName>
    </alternativeName>
    <alternativeName>
        <fullName>Valosin-containing protein</fullName>
        <shortName>VCP</shortName>
    </alternativeName>
</protein>
<dbReference type="EC" id="3.6.4.6" evidence="4"/>
<dbReference type="EMBL" id="Z14044">
    <property type="protein sequence ID" value="CAA78412.1"/>
    <property type="molecule type" value="mRNA"/>
</dbReference>
<dbReference type="EMBL" id="AK028264">
    <property type="protein sequence ID" value="BAC25849.1"/>
    <property type="molecule type" value="mRNA"/>
</dbReference>
<dbReference type="EMBL" id="AK030751">
    <property type="protein sequence ID" value="BAC27119.1"/>
    <property type="molecule type" value="mRNA"/>
</dbReference>
<dbReference type="EMBL" id="AK149931">
    <property type="protein sequence ID" value="BAE29175.1"/>
    <property type="molecule type" value="mRNA"/>
</dbReference>
<dbReference type="EMBL" id="AK151109">
    <property type="protein sequence ID" value="BAE30119.1"/>
    <property type="molecule type" value="mRNA"/>
</dbReference>
<dbReference type="EMBL" id="AK151418">
    <property type="protein sequence ID" value="BAE30383.1"/>
    <property type="molecule type" value="mRNA"/>
</dbReference>
<dbReference type="EMBL" id="AK153249">
    <property type="protein sequence ID" value="BAE31840.1"/>
    <property type="molecule type" value="mRNA"/>
</dbReference>
<dbReference type="EMBL" id="AK159177">
    <property type="protein sequence ID" value="BAE34876.1"/>
    <property type="molecule type" value="mRNA"/>
</dbReference>
<dbReference type="EMBL" id="AK159509">
    <property type="protein sequence ID" value="BAE35141.1"/>
    <property type="molecule type" value="mRNA"/>
</dbReference>
<dbReference type="EMBL" id="AK167794">
    <property type="protein sequence ID" value="BAE39824.1"/>
    <property type="molecule type" value="mRNA"/>
</dbReference>
<dbReference type="EMBL" id="AK169140">
    <property type="protein sequence ID" value="BAE40919.1"/>
    <property type="molecule type" value="mRNA"/>
</dbReference>
<dbReference type="EMBL" id="AL672276">
    <property type="status" value="NOT_ANNOTATED_CDS"/>
    <property type="molecule type" value="Genomic_DNA"/>
</dbReference>
<dbReference type="EMBL" id="BC043053">
    <property type="protein sequence ID" value="AAH43053.1"/>
    <property type="molecule type" value="mRNA"/>
</dbReference>
<dbReference type="EMBL" id="BC049114">
    <property type="protein sequence ID" value="AAH49114.1"/>
    <property type="molecule type" value="mRNA"/>
</dbReference>
<dbReference type="CCDS" id="CCDS18086.1"/>
<dbReference type="PIR" id="S25197">
    <property type="entry name" value="S25197"/>
</dbReference>
<dbReference type="RefSeq" id="NP_033529.3">
    <property type="nucleotide sequence ID" value="NM_009503.4"/>
</dbReference>
<dbReference type="PDB" id="1E32">
    <property type="method" value="X-ray"/>
    <property type="resolution" value="2.90 A"/>
    <property type="chains" value="A=1-458"/>
</dbReference>
<dbReference type="PDB" id="1R7R">
    <property type="method" value="X-ray"/>
    <property type="resolution" value="3.60 A"/>
    <property type="chains" value="A=1-806"/>
</dbReference>
<dbReference type="PDB" id="1S3S">
    <property type="method" value="X-ray"/>
    <property type="resolution" value="2.90 A"/>
    <property type="chains" value="A/B/C/D/E/F=1-458"/>
</dbReference>
<dbReference type="PDB" id="2PJH">
    <property type="method" value="NMR"/>
    <property type="chains" value="B=21-213"/>
</dbReference>
<dbReference type="PDB" id="3CF0">
    <property type="method" value="X-ray"/>
    <property type="resolution" value="3.00 A"/>
    <property type="chains" value="A/B/C/D/E/F/G/H/I/J/K/L/M/N=463-763"/>
</dbReference>
<dbReference type="PDB" id="3CF1">
    <property type="method" value="X-ray"/>
    <property type="resolution" value="4.40 A"/>
    <property type="chains" value="A/B/C=1-806"/>
</dbReference>
<dbReference type="PDB" id="3CF2">
    <property type="method" value="X-ray"/>
    <property type="resolution" value="3.50 A"/>
    <property type="chains" value="A/B/C/D=1-806"/>
</dbReference>
<dbReference type="PDB" id="3CF3">
    <property type="method" value="X-ray"/>
    <property type="resolution" value="4.25 A"/>
    <property type="chains" value="A/B/C=1-806"/>
</dbReference>
<dbReference type="PDBsum" id="1E32"/>
<dbReference type="PDBsum" id="1R7R"/>
<dbReference type="PDBsum" id="1S3S"/>
<dbReference type="PDBsum" id="2PJH"/>
<dbReference type="PDBsum" id="3CF0"/>
<dbReference type="PDBsum" id="3CF1"/>
<dbReference type="PDBsum" id="3CF2"/>
<dbReference type="PDBsum" id="3CF3"/>
<dbReference type="EMDB" id="EMD-2319"/>
<dbReference type="EMDB" id="EMD-2589"/>
<dbReference type="EMDB" id="EMD-2590"/>
<dbReference type="EMDB" id="EMD-2591"/>
<dbReference type="EMDB" id="EMD-2592"/>
<dbReference type="EMDB" id="EMD-2593"/>
<dbReference type="SMR" id="Q01853"/>
<dbReference type="BioGRID" id="234661">
    <property type="interactions" value="159"/>
</dbReference>
<dbReference type="ComplexPortal" id="CPX-136">
    <property type="entry name" value="Vcp-Npl4-Ufd1 AAA ATPase complex"/>
</dbReference>
<dbReference type="ComplexPortal" id="CPX-264">
    <property type="entry name" value="Vcp-Nsfl1c AAA ATPase complex"/>
</dbReference>
<dbReference type="CORUM" id="Q01853"/>
<dbReference type="DIP" id="DIP-29796N"/>
<dbReference type="FunCoup" id="Q01853">
    <property type="interactions" value="2384"/>
</dbReference>
<dbReference type="IntAct" id="Q01853">
    <property type="interactions" value="41"/>
</dbReference>
<dbReference type="MINT" id="Q01853"/>
<dbReference type="STRING" id="10090.ENSMUSP00000030164"/>
<dbReference type="BindingDB" id="Q01853"/>
<dbReference type="ChEMBL" id="CHEMBL3988606"/>
<dbReference type="GlyGen" id="Q01853">
    <property type="glycosylation" value="1 site, 1 O-linked glycan (1 site)"/>
</dbReference>
<dbReference type="iPTMnet" id="Q01853"/>
<dbReference type="MetOSite" id="Q01853"/>
<dbReference type="PhosphoSitePlus" id="Q01853"/>
<dbReference type="SwissPalm" id="Q01853"/>
<dbReference type="REPRODUCTION-2DPAGE" id="Q01853"/>
<dbReference type="CPTAC" id="non-CPTAC-4013"/>
<dbReference type="jPOST" id="Q01853"/>
<dbReference type="PaxDb" id="10090-ENSMUSP00000030164"/>
<dbReference type="PeptideAtlas" id="Q01853"/>
<dbReference type="ProteomicsDB" id="263105"/>
<dbReference type="Pumba" id="Q01853"/>
<dbReference type="Antibodypedia" id="2215">
    <property type="antibodies" value="677 antibodies from 43 providers"/>
</dbReference>
<dbReference type="DNASU" id="269523"/>
<dbReference type="Ensembl" id="ENSMUST00000030164.8">
    <property type="protein sequence ID" value="ENSMUSP00000030164.8"/>
    <property type="gene ID" value="ENSMUSG00000028452.8"/>
</dbReference>
<dbReference type="GeneID" id="269523"/>
<dbReference type="KEGG" id="mmu:269523"/>
<dbReference type="UCSC" id="uc008sor.2">
    <property type="organism name" value="mouse"/>
</dbReference>
<dbReference type="AGR" id="MGI:99919"/>
<dbReference type="CTD" id="7415"/>
<dbReference type="MGI" id="MGI:99919">
    <property type="gene designation" value="Vcp"/>
</dbReference>
<dbReference type="VEuPathDB" id="HostDB:ENSMUSG00000028452"/>
<dbReference type="eggNOG" id="KOG0730">
    <property type="taxonomic scope" value="Eukaryota"/>
</dbReference>
<dbReference type="GeneTree" id="ENSGT00900000141071"/>
<dbReference type="HOGENOM" id="CLU_000688_12_3_1"/>
<dbReference type="InParanoid" id="Q01853"/>
<dbReference type="OMA" id="VWPAYPE"/>
<dbReference type="OrthoDB" id="27435at2759"/>
<dbReference type="PhylomeDB" id="Q01853"/>
<dbReference type="TreeFam" id="TF300542"/>
<dbReference type="Reactome" id="R-MMU-110320">
    <property type="pathway name" value="Translesion Synthesis by POLH"/>
</dbReference>
<dbReference type="Reactome" id="R-MMU-3371511">
    <property type="pathway name" value="HSF1 activation"/>
</dbReference>
<dbReference type="Reactome" id="R-MMU-382556">
    <property type="pathway name" value="ABC-family proteins mediated transport"/>
</dbReference>
<dbReference type="Reactome" id="R-MMU-532668">
    <property type="pathway name" value="N-glycan trimming in the ER and Calnexin/Calreticulin cycle"/>
</dbReference>
<dbReference type="Reactome" id="R-MMU-5358346">
    <property type="pathway name" value="Hedgehog ligand biogenesis"/>
</dbReference>
<dbReference type="Reactome" id="R-MMU-5689877">
    <property type="pathway name" value="Josephin domain DUBs"/>
</dbReference>
<dbReference type="Reactome" id="R-MMU-5689896">
    <property type="pathway name" value="Ovarian tumor domain proteases"/>
</dbReference>
<dbReference type="Reactome" id="R-MMU-6798695">
    <property type="pathway name" value="Neutrophil degranulation"/>
</dbReference>
<dbReference type="Reactome" id="R-MMU-8876725">
    <property type="pathway name" value="Protein methylation"/>
</dbReference>
<dbReference type="Reactome" id="R-MMU-8951664">
    <property type="pathway name" value="Neddylation"/>
</dbReference>
<dbReference type="Reactome" id="R-MMU-9013407">
    <property type="pathway name" value="RHOH GTPase cycle"/>
</dbReference>
<dbReference type="Reactome" id="R-MMU-9755511">
    <property type="pathway name" value="KEAP1-NFE2L2 pathway"/>
</dbReference>
<dbReference type="BioGRID-ORCS" id="269523">
    <property type="hits" value="35 hits in 113 CRISPR screens"/>
</dbReference>
<dbReference type="CD-CODE" id="CE726F99">
    <property type="entry name" value="Postsynaptic density"/>
</dbReference>
<dbReference type="ChiTaRS" id="Vcp">
    <property type="organism name" value="mouse"/>
</dbReference>
<dbReference type="EvolutionaryTrace" id="Q01853"/>
<dbReference type="PRO" id="PR:Q01853"/>
<dbReference type="Proteomes" id="UP000000589">
    <property type="component" value="Chromosome 4"/>
</dbReference>
<dbReference type="RNAct" id="Q01853">
    <property type="molecule type" value="protein"/>
</dbReference>
<dbReference type="Bgee" id="ENSMUSG00000028452">
    <property type="expression patterns" value="Expressed in hindlimb stylopod muscle and 239 other cell types or tissues"/>
</dbReference>
<dbReference type="GO" id="GO:1904949">
    <property type="term" value="C:ATPase complex"/>
    <property type="evidence" value="ECO:0000315"/>
    <property type="project" value="CAFA"/>
</dbReference>
<dbReference type="GO" id="GO:0036064">
    <property type="term" value="C:ciliary basal body"/>
    <property type="evidence" value="ECO:0007669"/>
    <property type="project" value="Ensembl"/>
</dbReference>
<dbReference type="GO" id="GO:0005737">
    <property type="term" value="C:cytoplasm"/>
    <property type="evidence" value="ECO:0000303"/>
    <property type="project" value="ComplexPortal"/>
</dbReference>
<dbReference type="GO" id="GO:0010494">
    <property type="term" value="C:cytoplasmic stress granule"/>
    <property type="evidence" value="ECO:0000250"/>
    <property type="project" value="UniProtKB"/>
</dbReference>
<dbReference type="GO" id="GO:0005829">
    <property type="term" value="C:cytosol"/>
    <property type="evidence" value="ECO:0000250"/>
    <property type="project" value="UniProtKB"/>
</dbReference>
<dbReference type="GO" id="GO:0036513">
    <property type="term" value="C:Derlin-1 retrotranslocation complex"/>
    <property type="evidence" value="ECO:0000314"/>
    <property type="project" value="ParkinsonsUK-UCL"/>
</dbReference>
<dbReference type="GO" id="GO:0005783">
    <property type="term" value="C:endoplasmic reticulum"/>
    <property type="evidence" value="ECO:0000250"/>
    <property type="project" value="UniProtKB"/>
</dbReference>
<dbReference type="GO" id="GO:0005789">
    <property type="term" value="C:endoplasmic reticulum membrane"/>
    <property type="evidence" value="ECO:0000314"/>
    <property type="project" value="ParkinsonsUK-UCL"/>
</dbReference>
<dbReference type="GO" id="GO:0098978">
    <property type="term" value="C:glutamatergic synapse"/>
    <property type="evidence" value="ECO:0007669"/>
    <property type="project" value="Ensembl"/>
</dbReference>
<dbReference type="GO" id="GO:0005811">
    <property type="term" value="C:lipid droplet"/>
    <property type="evidence" value="ECO:0000266"/>
    <property type="project" value="MGI"/>
</dbReference>
<dbReference type="GO" id="GO:0043209">
    <property type="term" value="C:myelin sheath"/>
    <property type="evidence" value="ECO:0007005"/>
    <property type="project" value="UniProtKB"/>
</dbReference>
<dbReference type="GO" id="GO:0005654">
    <property type="term" value="C:nucleoplasm"/>
    <property type="evidence" value="ECO:0007669"/>
    <property type="project" value="Ensembl"/>
</dbReference>
<dbReference type="GO" id="GO:0048471">
    <property type="term" value="C:perinuclear region of cytoplasm"/>
    <property type="evidence" value="ECO:0007669"/>
    <property type="project" value="Ensembl"/>
</dbReference>
<dbReference type="GO" id="GO:0000502">
    <property type="term" value="C:proteasome complex"/>
    <property type="evidence" value="ECO:0007669"/>
    <property type="project" value="Ensembl"/>
</dbReference>
<dbReference type="GO" id="GO:0032991">
    <property type="term" value="C:protein-containing complex"/>
    <property type="evidence" value="ECO:0000353"/>
    <property type="project" value="MGI"/>
</dbReference>
<dbReference type="GO" id="GO:0035861">
    <property type="term" value="C:site of double-strand break"/>
    <property type="evidence" value="ECO:0000250"/>
    <property type="project" value="UniProtKB"/>
</dbReference>
<dbReference type="GO" id="GO:0045202">
    <property type="term" value="C:synapse"/>
    <property type="evidence" value="ECO:0000314"/>
    <property type="project" value="SynGO"/>
</dbReference>
<dbReference type="GO" id="GO:0034098">
    <property type="term" value="C:VCP-NPL4-UFD1 AAA ATPase complex"/>
    <property type="evidence" value="ECO:0000314"/>
    <property type="project" value="ParkinsonsUK-UCL"/>
</dbReference>
<dbReference type="GO" id="GO:1990730">
    <property type="term" value="C:VCP-NSFL1C complex"/>
    <property type="evidence" value="ECO:0000353"/>
    <property type="project" value="ParkinsonsUK-UCL"/>
</dbReference>
<dbReference type="GO" id="GO:0043531">
    <property type="term" value="F:ADP binding"/>
    <property type="evidence" value="ECO:0000315"/>
    <property type="project" value="CAFA"/>
</dbReference>
<dbReference type="GO" id="GO:0005524">
    <property type="term" value="F:ATP binding"/>
    <property type="evidence" value="ECO:0000314"/>
    <property type="project" value="ParkinsonsUK-UCL"/>
</dbReference>
<dbReference type="GO" id="GO:0016887">
    <property type="term" value="F:ATP hydrolysis activity"/>
    <property type="evidence" value="ECO:0000314"/>
    <property type="project" value="ParkinsonsUK-UCL"/>
</dbReference>
<dbReference type="GO" id="GO:1904288">
    <property type="term" value="F:BAT3 complex binding"/>
    <property type="evidence" value="ECO:0007669"/>
    <property type="project" value="Ensembl"/>
</dbReference>
<dbReference type="GO" id="GO:0035800">
    <property type="term" value="F:deubiquitinase activator activity"/>
    <property type="evidence" value="ECO:0007669"/>
    <property type="project" value="Ensembl"/>
</dbReference>
<dbReference type="GO" id="GO:0042802">
    <property type="term" value="F:identical protein binding"/>
    <property type="evidence" value="ECO:0000353"/>
    <property type="project" value="IntAct"/>
</dbReference>
<dbReference type="GO" id="GO:0036435">
    <property type="term" value="F:K48-linked polyubiquitin modification-dependent protein binding"/>
    <property type="evidence" value="ECO:0000314"/>
    <property type="project" value="ParkinsonsUK-UCL"/>
</dbReference>
<dbReference type="GO" id="GO:0008289">
    <property type="term" value="F:lipid binding"/>
    <property type="evidence" value="ECO:0007669"/>
    <property type="project" value="UniProtKB-KW"/>
</dbReference>
<dbReference type="GO" id="GO:0042288">
    <property type="term" value="F:MHC class I protein binding"/>
    <property type="evidence" value="ECO:0000314"/>
    <property type="project" value="ParkinsonsUK-UCL"/>
</dbReference>
<dbReference type="GO" id="GO:0031593">
    <property type="term" value="F:polyubiquitin modification-dependent protein binding"/>
    <property type="evidence" value="ECO:0000314"/>
    <property type="project" value="BHF-UCL"/>
</dbReference>
<dbReference type="GO" id="GO:0019904">
    <property type="term" value="F:protein domain specific binding"/>
    <property type="evidence" value="ECO:0007669"/>
    <property type="project" value="Ensembl"/>
</dbReference>
<dbReference type="GO" id="GO:0019903">
    <property type="term" value="F:protein phosphatase binding"/>
    <property type="evidence" value="ECO:0007669"/>
    <property type="project" value="Ensembl"/>
</dbReference>
<dbReference type="GO" id="GO:0031625">
    <property type="term" value="F:ubiquitin protein ligase binding"/>
    <property type="evidence" value="ECO:0007669"/>
    <property type="project" value="Ensembl"/>
</dbReference>
<dbReference type="GO" id="GO:0140036">
    <property type="term" value="F:ubiquitin-modified protein reader activity"/>
    <property type="evidence" value="ECO:0007669"/>
    <property type="project" value="Ensembl"/>
</dbReference>
<dbReference type="GO" id="GO:1990381">
    <property type="term" value="F:ubiquitin-specific protease binding"/>
    <property type="evidence" value="ECO:0000353"/>
    <property type="project" value="ParkinsonsUK-UCL"/>
</dbReference>
<dbReference type="GO" id="GO:0070842">
    <property type="term" value="P:aggresome assembly"/>
    <property type="evidence" value="ECO:0000316"/>
    <property type="project" value="MGI"/>
</dbReference>
<dbReference type="GO" id="GO:0046034">
    <property type="term" value="P:ATP metabolic process"/>
    <property type="evidence" value="ECO:0000314"/>
    <property type="project" value="ParkinsonsUK-UCL"/>
</dbReference>
<dbReference type="GO" id="GO:0097352">
    <property type="term" value="P:autophagosome maturation"/>
    <property type="evidence" value="ECO:0000250"/>
    <property type="project" value="UniProtKB"/>
</dbReference>
<dbReference type="GO" id="GO:0006914">
    <property type="term" value="P:autophagy"/>
    <property type="evidence" value="ECO:0000250"/>
    <property type="project" value="UniProtKB"/>
</dbReference>
<dbReference type="GO" id="GO:1903843">
    <property type="term" value="P:cellular response to arsenite ion"/>
    <property type="evidence" value="ECO:0000250"/>
    <property type="project" value="UniProtKB"/>
</dbReference>
<dbReference type="GO" id="GO:0034605">
    <property type="term" value="P:cellular response to heat"/>
    <property type="evidence" value="ECO:0000250"/>
    <property type="project" value="UniProtKB"/>
</dbReference>
<dbReference type="GO" id="GO:0071218">
    <property type="term" value="P:cellular response to misfolded protein"/>
    <property type="evidence" value="ECO:0007669"/>
    <property type="project" value="Ensembl"/>
</dbReference>
<dbReference type="GO" id="GO:0140455">
    <property type="term" value="P:cytoplasm protein quality control"/>
    <property type="evidence" value="ECO:0007669"/>
    <property type="project" value="Ensembl"/>
</dbReference>
<dbReference type="GO" id="GO:0006974">
    <property type="term" value="P:DNA damage response"/>
    <property type="evidence" value="ECO:0000250"/>
    <property type="project" value="UniProtKB"/>
</dbReference>
<dbReference type="GO" id="GO:0006281">
    <property type="term" value="P:DNA repair"/>
    <property type="evidence" value="ECO:0000250"/>
    <property type="project" value="UniProtKB"/>
</dbReference>
<dbReference type="GO" id="GO:0006302">
    <property type="term" value="P:double-strand break repair"/>
    <property type="evidence" value="ECO:0000250"/>
    <property type="project" value="UniProtKB"/>
</dbReference>
<dbReference type="GO" id="GO:0061857">
    <property type="term" value="P:endoplasmic reticulum stress-induced pre-emptive quality control"/>
    <property type="evidence" value="ECO:0000250"/>
    <property type="project" value="UniProtKB"/>
</dbReference>
<dbReference type="GO" id="GO:0006888">
    <property type="term" value="P:endoplasmic reticulum to Golgi vesicle-mediated transport"/>
    <property type="evidence" value="ECO:0007669"/>
    <property type="project" value="Ensembl"/>
</dbReference>
<dbReference type="GO" id="GO:0032510">
    <property type="term" value="P:endosome to lysosome transport via multivesicular body sorting pathway"/>
    <property type="evidence" value="ECO:0000250"/>
    <property type="project" value="UniProtKB"/>
</dbReference>
<dbReference type="GO" id="GO:0036503">
    <property type="term" value="P:ERAD pathway"/>
    <property type="evidence" value="ECO:0000269"/>
    <property type="project" value="ComplexPortal"/>
</dbReference>
<dbReference type="GO" id="GO:0072389">
    <property type="term" value="P:flavin adenine dinucleotide catabolic process"/>
    <property type="evidence" value="ECO:0007669"/>
    <property type="project" value="Ensembl"/>
</dbReference>
<dbReference type="GO" id="GO:0036297">
    <property type="term" value="P:interstrand cross-link repair"/>
    <property type="evidence" value="ECO:0000250"/>
    <property type="project" value="UniProtKB"/>
</dbReference>
<dbReference type="GO" id="GO:0016236">
    <property type="term" value="P:macroautophagy"/>
    <property type="evidence" value="ECO:0000250"/>
    <property type="project" value="UniProtKB"/>
</dbReference>
<dbReference type="GO" id="GO:0006734">
    <property type="term" value="P:NADH metabolic process"/>
    <property type="evidence" value="ECO:0007669"/>
    <property type="project" value="Ensembl"/>
</dbReference>
<dbReference type="GO" id="GO:0035331">
    <property type="term" value="P:negative regulation of hippo signaling"/>
    <property type="evidence" value="ECO:0007669"/>
    <property type="project" value="Ensembl"/>
</dbReference>
<dbReference type="GO" id="GO:0120186">
    <property type="term" value="P:negative regulation of protein localization to chromatin"/>
    <property type="evidence" value="ECO:0007669"/>
    <property type="project" value="Ensembl"/>
</dbReference>
<dbReference type="GO" id="GO:0045879">
    <property type="term" value="P:negative regulation of smoothened signaling pathway"/>
    <property type="evidence" value="ECO:0007669"/>
    <property type="project" value="Ensembl"/>
</dbReference>
<dbReference type="GO" id="GO:2001171">
    <property type="term" value="P:positive regulation of ATP biosynthetic process"/>
    <property type="evidence" value="ECO:0007669"/>
    <property type="project" value="Ensembl"/>
</dbReference>
<dbReference type="GO" id="GO:0090263">
    <property type="term" value="P:positive regulation of canonical Wnt signaling pathway"/>
    <property type="evidence" value="ECO:0007669"/>
    <property type="project" value="Ensembl"/>
</dbReference>
<dbReference type="GO" id="GO:0010918">
    <property type="term" value="P:positive regulation of mitochondrial membrane potential"/>
    <property type="evidence" value="ECO:0000315"/>
    <property type="project" value="ParkinsonsUK-UCL"/>
</dbReference>
<dbReference type="GO" id="GO:1901224">
    <property type="term" value="P:positive regulation of non-canonical NF-kappaB signal transduction"/>
    <property type="evidence" value="ECO:0007669"/>
    <property type="project" value="Ensembl"/>
</dbReference>
<dbReference type="GO" id="GO:1903862">
    <property type="term" value="P:positive regulation of oxidative phosphorylation"/>
    <property type="evidence" value="ECO:0007669"/>
    <property type="project" value="Ensembl"/>
</dbReference>
<dbReference type="GO" id="GO:0032436">
    <property type="term" value="P:positive regulation of proteasomal ubiquitin-dependent protein catabolic process"/>
    <property type="evidence" value="ECO:0007669"/>
    <property type="project" value="Ensembl"/>
</dbReference>
<dbReference type="GO" id="GO:1903006">
    <property type="term" value="P:positive regulation of protein K63-linked deubiquitination"/>
    <property type="evidence" value="ECO:0007669"/>
    <property type="project" value="Ensembl"/>
</dbReference>
<dbReference type="GO" id="GO:0031334">
    <property type="term" value="P:positive regulation of protein-containing complex assembly"/>
    <property type="evidence" value="ECO:0007669"/>
    <property type="project" value="Ensembl"/>
</dbReference>
<dbReference type="GO" id="GO:0010498">
    <property type="term" value="P:proteasomal protein catabolic process"/>
    <property type="evidence" value="ECO:0000250"/>
    <property type="project" value="UniProtKB"/>
</dbReference>
<dbReference type="GO" id="GO:0043161">
    <property type="term" value="P:proteasome-mediated ubiquitin-dependent protein catabolic process"/>
    <property type="evidence" value="ECO:0000315"/>
    <property type="project" value="UniProtKB"/>
</dbReference>
<dbReference type="GO" id="GO:0016567">
    <property type="term" value="P:protein ubiquitination"/>
    <property type="evidence" value="ECO:0000250"/>
    <property type="project" value="UniProtKB"/>
</dbReference>
<dbReference type="GO" id="GO:0106300">
    <property type="term" value="P:protein-DNA covalent cross-linking repair"/>
    <property type="evidence" value="ECO:0000250"/>
    <property type="project" value="UniProtKB"/>
</dbReference>
<dbReference type="GO" id="GO:1905634">
    <property type="term" value="P:regulation of protein localization to chromatin"/>
    <property type="evidence" value="ECO:0000250"/>
    <property type="project" value="UniProtKB"/>
</dbReference>
<dbReference type="GO" id="GO:0050807">
    <property type="term" value="P:regulation of synapse organization"/>
    <property type="evidence" value="ECO:0007669"/>
    <property type="project" value="Ensembl"/>
</dbReference>
<dbReference type="GO" id="GO:0030970">
    <property type="term" value="P:retrograde protein transport, ER to cytosol"/>
    <property type="evidence" value="ECO:0000315"/>
    <property type="project" value="ParkinsonsUK-UCL"/>
</dbReference>
<dbReference type="GO" id="GO:0035617">
    <property type="term" value="P:stress granule disassembly"/>
    <property type="evidence" value="ECO:0000250"/>
    <property type="project" value="UniProtKB"/>
</dbReference>
<dbReference type="GO" id="GO:0019985">
    <property type="term" value="P:translesion synthesis"/>
    <property type="evidence" value="ECO:0000250"/>
    <property type="project" value="UniProtKB"/>
</dbReference>
<dbReference type="GO" id="GO:0006511">
    <property type="term" value="P:ubiquitin-dependent protein catabolic process"/>
    <property type="evidence" value="ECO:0000316"/>
    <property type="project" value="MGI"/>
</dbReference>
<dbReference type="GO" id="GO:0019079">
    <property type="term" value="P:viral genome replication"/>
    <property type="evidence" value="ECO:0007669"/>
    <property type="project" value="Ensembl"/>
</dbReference>
<dbReference type="CDD" id="cd19519">
    <property type="entry name" value="RecA-like_CDC48_r1-like"/>
    <property type="match status" value="1"/>
</dbReference>
<dbReference type="CDD" id="cd19528">
    <property type="entry name" value="RecA-like_CDC48_r2-like"/>
    <property type="match status" value="1"/>
</dbReference>
<dbReference type="DisProt" id="DP00435"/>
<dbReference type="FunFam" id="1.10.8.60:FF:000004">
    <property type="entry name" value="Cell division control 48"/>
    <property type="match status" value="1"/>
</dbReference>
<dbReference type="FunFam" id="3.10.330.10:FF:000001">
    <property type="entry name" value="Cell division control 48"/>
    <property type="match status" value="1"/>
</dbReference>
<dbReference type="FunFam" id="2.40.40.20:FF:000003">
    <property type="entry name" value="Transitional endoplasmic reticulum ATPase"/>
    <property type="match status" value="1"/>
</dbReference>
<dbReference type="FunFam" id="3.40.50.300:FF:000012">
    <property type="entry name" value="Transitional endoplasmic reticulum ATPase"/>
    <property type="match status" value="1"/>
</dbReference>
<dbReference type="FunFam" id="3.40.50.300:FF:000048">
    <property type="entry name" value="Transitional endoplasmic reticulum ATPase"/>
    <property type="match status" value="1"/>
</dbReference>
<dbReference type="Gene3D" id="1.10.8.60">
    <property type="match status" value="1"/>
</dbReference>
<dbReference type="Gene3D" id="2.40.40.20">
    <property type="match status" value="1"/>
</dbReference>
<dbReference type="Gene3D" id="3.10.330.10">
    <property type="match status" value="1"/>
</dbReference>
<dbReference type="Gene3D" id="6.10.20.150">
    <property type="match status" value="1"/>
</dbReference>
<dbReference type="Gene3D" id="3.40.50.300">
    <property type="entry name" value="P-loop containing nucleotide triphosphate hydrolases"/>
    <property type="match status" value="2"/>
</dbReference>
<dbReference type="IDEAL" id="IID50030"/>
<dbReference type="InterPro" id="IPR003593">
    <property type="entry name" value="AAA+_ATPase"/>
</dbReference>
<dbReference type="InterPro" id="IPR005938">
    <property type="entry name" value="AAA_ATPase_CDC48"/>
</dbReference>
<dbReference type="InterPro" id="IPR050168">
    <property type="entry name" value="AAA_ATPase_domain"/>
</dbReference>
<dbReference type="InterPro" id="IPR041569">
    <property type="entry name" value="AAA_lid_3"/>
</dbReference>
<dbReference type="InterPro" id="IPR009010">
    <property type="entry name" value="Asp_de-COase-like_dom_sf"/>
</dbReference>
<dbReference type="InterPro" id="IPR003959">
    <property type="entry name" value="ATPase_AAA_core"/>
</dbReference>
<dbReference type="InterPro" id="IPR003960">
    <property type="entry name" value="ATPase_AAA_CS"/>
</dbReference>
<dbReference type="InterPro" id="IPR004201">
    <property type="entry name" value="Cdc48_dom2"/>
</dbReference>
<dbReference type="InterPro" id="IPR029067">
    <property type="entry name" value="CDC48_domain_2-like_sf"/>
</dbReference>
<dbReference type="InterPro" id="IPR003338">
    <property type="entry name" value="CDC4_N-term_subdom"/>
</dbReference>
<dbReference type="InterPro" id="IPR027417">
    <property type="entry name" value="P-loop_NTPase"/>
</dbReference>
<dbReference type="NCBIfam" id="TIGR01243">
    <property type="entry name" value="CDC48"/>
    <property type="match status" value="1"/>
</dbReference>
<dbReference type="PANTHER" id="PTHR23077">
    <property type="entry name" value="AAA-FAMILY ATPASE"/>
    <property type="match status" value="1"/>
</dbReference>
<dbReference type="PANTHER" id="PTHR23077:SF69">
    <property type="entry name" value="TRANSITIONAL ENDOPLASMIC RETICULUM ATPASE"/>
    <property type="match status" value="1"/>
</dbReference>
<dbReference type="Pfam" id="PF00004">
    <property type="entry name" value="AAA"/>
    <property type="match status" value="2"/>
</dbReference>
<dbReference type="Pfam" id="PF17862">
    <property type="entry name" value="AAA_lid_3"/>
    <property type="match status" value="2"/>
</dbReference>
<dbReference type="Pfam" id="PF02933">
    <property type="entry name" value="CDC48_2"/>
    <property type="match status" value="1"/>
</dbReference>
<dbReference type="Pfam" id="PF02359">
    <property type="entry name" value="CDC48_N"/>
    <property type="match status" value="1"/>
</dbReference>
<dbReference type="SMART" id="SM00382">
    <property type="entry name" value="AAA"/>
    <property type="match status" value="2"/>
</dbReference>
<dbReference type="SMART" id="SM01072">
    <property type="entry name" value="CDC48_2"/>
    <property type="match status" value="1"/>
</dbReference>
<dbReference type="SMART" id="SM01073">
    <property type="entry name" value="CDC48_N"/>
    <property type="match status" value="1"/>
</dbReference>
<dbReference type="SUPFAM" id="SSF50692">
    <property type="entry name" value="ADC-like"/>
    <property type="match status" value="1"/>
</dbReference>
<dbReference type="SUPFAM" id="SSF54585">
    <property type="entry name" value="Cdc48 domain 2-like"/>
    <property type="match status" value="1"/>
</dbReference>
<dbReference type="SUPFAM" id="SSF52540">
    <property type="entry name" value="P-loop containing nucleoside triphosphate hydrolases"/>
    <property type="match status" value="2"/>
</dbReference>
<dbReference type="PROSITE" id="PS00674">
    <property type="entry name" value="AAA"/>
    <property type="match status" value="2"/>
</dbReference>
<sequence>MASGADSKGDDLSTAILKQKNRPNRLIVDEAINEDNSVVSLSQPKMDELQLFRGDTVLLKGKKRREAVCIVLSDDTCSDEKIRMNRVVRNNLRVRLGDVISIQPCPDVKYGKRIHVLPIDDTVEGITGNLFEVYLKPYFLEAYRPIRKGDIFLVRGGMRAVEFKVVETDPSPYCIVAPDTVIHCEGEPIKREDEEESLNEVGYDDIGGCRKQLAQIKEMVELPLRHPALFKAIGVKPPRGILLYGPPGTGKTLIARAVANETGAFFFLINGPEIMSKLAGESESNLRKAFEEAEKNAPAIIFIDELDAIAPKREKTHGEVERRIVSQLLTLMDGLKQRAHVIVMAATNRPNSIDPALRRFGRFDREVDIGIPDATGRLEILQIHTKNMKLADDVDLEQVANETHGHVGADLAALCSEAALQAIRKKMDLIDLEDETIDAEVMNSLAVTMDDFRWALSQSNPSALRETVVEVPQVTWEDIGGLEDVKRELQELVQYPVEHPDKFLKFGMTPSKGVLFYGPPGCGKTLLAKAIANECQANFISIKGPELLTMWFGESEANVREIFDKARQAAPCVLFFDELDSIAKARGGNIGDGGGAADRVINQILTEMDGMSTKKNVFIIGATNRPDIIDPAILRPGRLDQLIYIPLPDEKSRVAILKANLRKSPVAKDVDLEFLAKMTNGFSGADLTEICQRACKLAIRESIESEIRRERERQTNPSAMEVEEDDPVPEIRRDHFEEAMRFARRSVSDNDIRKYEMFAQTLQQSRGFGSFRFPSGNQGGAGPSQGSGGGTGGSVYTEDNDDDLYG</sequence>
<organism>
    <name type="scientific">Mus musculus</name>
    <name type="common">Mouse</name>
    <dbReference type="NCBI Taxonomy" id="10090"/>
    <lineage>
        <taxon>Eukaryota</taxon>
        <taxon>Metazoa</taxon>
        <taxon>Chordata</taxon>
        <taxon>Craniata</taxon>
        <taxon>Vertebrata</taxon>
        <taxon>Euteleostomi</taxon>
        <taxon>Mammalia</taxon>
        <taxon>Eutheria</taxon>
        <taxon>Euarchontoglires</taxon>
        <taxon>Glires</taxon>
        <taxon>Rodentia</taxon>
        <taxon>Myomorpha</taxon>
        <taxon>Muroidea</taxon>
        <taxon>Muridae</taxon>
        <taxon>Murinae</taxon>
        <taxon>Mus</taxon>
        <taxon>Mus</taxon>
    </lineage>
</organism>
<name>TERA_MOUSE</name>
<evidence type="ECO:0000250" key="1"/>
<evidence type="ECO:0000250" key="2">
    <source>
        <dbReference type="UniProtKB" id="P23787"/>
    </source>
</evidence>
<evidence type="ECO:0000250" key="3">
    <source>
        <dbReference type="UniProtKB" id="P46462"/>
    </source>
</evidence>
<evidence type="ECO:0000250" key="4">
    <source>
        <dbReference type="UniProtKB" id="P55072"/>
    </source>
</evidence>
<evidence type="ECO:0000256" key="5">
    <source>
        <dbReference type="SAM" id="MobiDB-lite"/>
    </source>
</evidence>
<evidence type="ECO:0000269" key="6">
    <source>
    </source>
</evidence>
<evidence type="ECO:0000269" key="7">
    <source>
    </source>
</evidence>
<evidence type="ECO:0000269" key="8">
    <source>
    </source>
</evidence>
<evidence type="ECO:0000269" key="9">
    <source>
    </source>
</evidence>
<evidence type="ECO:0000269" key="10">
    <source>
    </source>
</evidence>
<evidence type="ECO:0000269" key="11">
    <source>
    </source>
</evidence>
<evidence type="ECO:0000269" key="12">
    <source>
    </source>
</evidence>
<evidence type="ECO:0000269" key="13">
    <source>
    </source>
</evidence>
<evidence type="ECO:0000269" key="14">
    <source>
    </source>
</evidence>
<evidence type="ECO:0000269" key="15">
    <source>
    </source>
</evidence>
<evidence type="ECO:0000269" key="16">
    <source>
    </source>
</evidence>
<evidence type="ECO:0000269" key="17">
    <source>
    </source>
</evidence>
<evidence type="ECO:0000269" key="18">
    <source>
    </source>
</evidence>
<evidence type="ECO:0000269" key="19">
    <source>
    </source>
</evidence>
<evidence type="ECO:0000305" key="20"/>
<evidence type="ECO:0000305" key="21">
    <source>
    </source>
</evidence>
<evidence type="ECO:0000305" key="22">
    <source>
    </source>
</evidence>
<evidence type="ECO:0000312" key="23">
    <source>
        <dbReference type="MGI" id="MGI:99919"/>
    </source>
</evidence>
<evidence type="ECO:0007744" key="24">
    <source>
    </source>
</evidence>
<evidence type="ECO:0007744" key="25">
    <source>
    </source>
</evidence>
<evidence type="ECO:0007744" key="26">
    <source>
    </source>
</evidence>
<evidence type="ECO:0007829" key="27">
    <source>
        <dbReference type="PDB" id="1E32"/>
    </source>
</evidence>
<evidence type="ECO:0007829" key="28">
    <source>
        <dbReference type="PDB" id="1S3S"/>
    </source>
</evidence>
<evidence type="ECO:0007829" key="29">
    <source>
        <dbReference type="PDB" id="2PJH"/>
    </source>
</evidence>
<evidence type="ECO:0007829" key="30">
    <source>
        <dbReference type="PDB" id="3CF0"/>
    </source>
</evidence>
<evidence type="ECO:0007829" key="31">
    <source>
        <dbReference type="PDB" id="3CF2"/>
    </source>
</evidence>
<comment type="function">
    <text evidence="2 3 4 19">Necessary for the fragmentation of Golgi stacks during mitosis and for their reassembly after mitosis. Involved in the formation of the transitional endoplasmic reticulum (tER). The transfer of membranes from the endoplasmic reticulum to the Golgi apparatus occurs via 50-70 nm transition vesicles which derive from part-rough, part-smooth transitional elements of the endoplasmic reticulum (tER). Vesicle budding from the tER is an ATP-dependent process. The ternary complex containing UFD1, VCP and NPLOC4 binds ubiquitinated proteins and is necessary for the export of misfolded proteins from the ER to the cytoplasm, where they are degraded by the proteasome. The NPLOC4-UFD1-VCP complex regulates spindle disassembly at the end of mitosis and is necessary for the formation of a closed nuclear envelope. Regulates E3 ubiquitin-protein ligase activity of RNF19A. Component of the VCP/p97-AMFR/gp78 complex that participates in the final step of the sterol-mediated ubiquitination and endoplasmic reticulum-associated degradation (ERAD) of HMGCR. Mediates the endoplasmic reticulum-associated degradation of CHRNA3 in cortical neurons as part of the STUB1-VCP-UBXN2A complex (By similarity). Involved in endoplasmic reticulum stress-induced pre-emptive quality control, a mechanism that selectively attenuates the translocation of newly synthesized proteins into the endoplasmic reticulum and reroutes them to the cytosol for proteasomal degradation. Involved in clearance process by mediating G3BP1 extraction from stress granules (By similarity). Also involved in DNA damage response: recruited to double-strand breaks (DSBs) sites in a RNF8- and RNF168-dependent manner and promotes the recruitment of TP53BP1 at DNA damage sites. Recruited to stalled replication forks by SPRTN: may act by mediating extraction of DNA polymerase eta (POLH) to prevent excessive translesion DNA synthesis and limit the incidence of mutations induced by DNA damage. Together with SPRTN metalloprotease, involved in the repair of covalent DNA-protein cross-links (DPCs) during DNA synthesis (By similarity). Involved in interstrand cross-link repair in response to replication stress by mediating unloading of the ubiquitinated CMG helicase complex (PubMed:33590678). Mediates extraction of PARP1 trapped to chromatin: recognizes and binds ubiquitinated PARP1 and promotes its removal (By similarity). Required for cytoplasmic retrotranslocation of stressed/damaged mitochondrial outer-membrane proteins and their subsequent proteasomal degradation. Essential for the maturation of ubiquitin-containing autophagosomes and the clearance of ubiquitinated protein by autophagy. Acts as a negative regulator of type I interferon production by interacting with RIGI: interaction takes place when RIGI is ubiquitinated via 'Lys-63'-linked ubiquitin on its CARD domains, leading to recruit RNF125 and promote ubiquitination and degradation of RIGI. May play a role in the ubiquitin-dependent sorting of membrane proteins to lysosomes where they undergo degradation. May more particularly play a role in caveolins sorting in cells. By controlling the steady-state expression of the IGF1R receptor, indirectly regulates the insulin-like growth factor receptor signaling pathway.</text>
</comment>
<comment type="catalytic activity">
    <reaction evidence="4">
        <text>ATP + H2O = ADP + phosphate + H(+)</text>
        <dbReference type="Rhea" id="RHEA:13065"/>
        <dbReference type="ChEBI" id="CHEBI:15377"/>
        <dbReference type="ChEBI" id="CHEBI:15378"/>
        <dbReference type="ChEBI" id="CHEBI:30616"/>
        <dbReference type="ChEBI" id="CHEBI:43474"/>
        <dbReference type="ChEBI" id="CHEBI:456216"/>
        <dbReference type="EC" id="3.6.4.6"/>
    </reaction>
</comment>
<comment type="subunit">
    <text evidence="3 4 6 7 9 10 12 14 15 17 18">Homohexamer. Forms a ring-shaped particle of 12.5 nm diameter, that displays 6-fold radial symmetry. Part of a ternary complex containing STX5A, NSFL1C and VCP. NSFL1C forms a homotrimer that binds to one end of a VCP homohexamer. The complex binds to membranes enriched in phosphatidylethanolamine-containing lipids and promotes Golgi membrane fusion. Binds to a heterodimer of NPLOC4 and UFD1, binding to this heterodimer inhibits Golgi-membrane fusion. Interaction with VCIP135 leads to dissociation of the complex via ATP hydrolysis by VCP. Part of a ternary complex containing NPLOC4, UFD1 and VCP. Interacts with NSFL1C-like protein p37; the complex has membrane fusion activity and is required for Golgi and endoplasmic reticulum biogenesis. Interacts with RNF103. Interacts with TRIM13 and TRIM21. Component of a VCP/p97-AMFR/gp78 complex that participates in the final step of the endoplasmic reticulum-associated degradation (ERAD) of HMGCR. Interacts directly with AMFR/gp78 (via its VIM). Interacts with RHBDD1 (via C-terminal domain). Interacts with SPRTN; leading to recruitment to stalled replication forks. Interacts with SELENOS and SYVN1, as well as with DERL1 (via SHP-box motif), DERL2 and DERL3; which probably transfer misfolded proteins from the ER to VCP. Interacts with SVIP and DERL1 (By similarity). Component of a complex required to couple retrotranslocation, ubiquitination and deglycosylation composed of NGLY1, SAKS1, AMFR, VCP and RAD23B. Part of a complex composed of STUB1/CHIP, VCP/p97, CHRNA3, and UBXN2A that modulates the ubiquitination and endoplasmic reticulum-associated degradation (ERAD) of CHRNA3 (By similarity). Within the complex UBXN2A acts as a scaffold protein required for the interaction of CHRNA3 with VCP/p97, this interaction also inhibits CHRNA3 ubiquitination by STUB1/CHIP and subsequently ERAD (By similarity). Interacts with UBXN2A (via UBX domain); the interaction is required for the interaction of CHRNA3 in the STUB1-VCP-UBXN2A complex (By similarity). Directly interacts with UBXN4 and RNF19A. Interacts with CASR. Interacts with UBE4B and YOD1. Interacts with clathrin. Interacts with RNF103. Interacts with TRIM13 and TRIM21. Component of a VCP/p97-AMFR/gp78 complex that participates in the final step of the endoplasmic reticulum-associated degradation (ERAD) of HMGCR. Interacts directly with AMFR/gp78 (via its VIM). Interacts with WASHC5. Interacts with UBOX5. Interacts (via N- terminus) with UBXN7, UBXN8, and probably several other UBX domain-containing proteins (via UBX domains); the interactions are mutually exclusive with VIM-dependent interactions such as those with AMFR and SELENOS. Forms a complex with UBQLN1 and UBXN4 (By similarity). Interacts (via the PIM motif) with RNF31 (via the PUB domain) (By similarity). Interacts with RIGI and RNF125; interaction takes place when RIGI is ubiquitinated via'Lys-63'-linked ubiquitin on its CARD domains, leading to recruit RNF125 and promote ubiquitination and degradation of RIGI (By similarity). Interacts with BAG6 (By similarity). Interacts with UBXN10 (By similarity). Interacts with UBXN6; the interaction with UBXN6 is direct and competitive with UFD1 (By similarity). Forms a ternary complex with CAV1 and UBXN6. Interacts with PLAA, UBXN6 and YOD1; may form a complex involved in macroautophagy (By similarity). Interacts with ANKZF1 (By similarity). Interacts with ubiquitin-binding protein FAF1 (By similarity). Interacts with ZFAND2B (via VIM motif); the interaction is direct (PubMed:24160817, PubMed:26337389). Interacts with ZFAND1 (via its ubiquitin-like region); this interaction occurs in an arsenite-dependent manner (By similarity). Interacts with CCDC47 (PubMed:25009997). Interacts with LMBR1L and UBAC2 (PubMed:31073040). Interacts with ATXN3 (By similarity). Interacts with TEX264; bridging VCP to covalent DNA-protein cross-links (DPCs) (By similarity). Interacts with FBXL4 (By similarity).</text>
</comment>
<comment type="interaction">
    <interactant intactId="EBI-80597">
        <id>Q01853</id>
    </interactant>
    <interactant intactId="EBI-3648125">
        <id>Q9R049</id>
        <label>Amfr</label>
    </interactant>
    <organismsDiffer>false</organismsDiffer>
    <experiments>4</experiments>
</comment>
<comment type="interaction">
    <interactant intactId="EBI-80597">
        <id>Q01853</id>
    </interactant>
    <interactant intactId="EBI-9510971">
        <id>Q80UU1</id>
        <label>Ankzf1</label>
    </interactant>
    <organismsDiffer>false</organismsDiffer>
    <experiments>2</experiments>
</comment>
<comment type="interaction">
    <interactant intactId="EBI-80597">
        <id>Q01853</id>
    </interactant>
    <interactant intactId="EBI-3648128">
        <id>Q9JI78</id>
        <label>Ngly1</label>
    </interactant>
    <organismsDiffer>false</organismsDiffer>
    <experiments>9</experiments>
</comment>
<comment type="interaction">
    <interactant intactId="EBI-80597">
        <id>Q01853</id>
    </interactant>
    <interactant intactId="EBI-7961331">
        <id>P70362</id>
        <label>Ufd1</label>
    </interactant>
    <organismsDiffer>false</organismsDiffer>
    <experiments>9</experiments>
</comment>
<comment type="interaction">
    <interactant intactId="EBI-80597">
        <id>Q01853</id>
    </interactant>
    <interactant intactId="EBI-80597">
        <id>Q01853</id>
        <label>Vcp</label>
    </interactant>
    <organismsDiffer>false</organismsDiffer>
    <experiments>3</experiments>
</comment>
<comment type="interaction">
    <interactant intactId="EBI-80597">
        <id>Q01853</id>
    </interactant>
    <interactant intactId="EBI-6017">
        <id>P36037</id>
        <label>DOA1</label>
    </interactant>
    <organismsDiffer>true</organismsDiffer>
    <experiments>2</experiments>
</comment>
<comment type="interaction">
    <interactant intactId="EBI-80597">
        <id>Q01853</id>
    </interactant>
    <interactant intactId="EBI-1993990">
        <id>Q9ES54</id>
        <label>Nploc4</label>
    </interactant>
    <organismsDiffer>true</organismsDiffer>
    <experiments>11</experiments>
</comment>
<comment type="interaction">
    <interactant intactId="EBI-80597">
        <id>Q01853</id>
    </interactant>
    <interactant intactId="EBI-1993760">
        <id>O35987</id>
        <label>Nsfl1c</label>
    </interactant>
    <organismsDiffer>true</organismsDiffer>
    <experiments>8</experiments>
</comment>
<comment type="interaction">
    <interactant intactId="EBI-80597">
        <id>Q01853</id>
    </interactant>
    <interactant intactId="EBI-398970">
        <id>Q9BQE4</id>
        <label>SELENOS</label>
    </interactant>
    <organismsDiffer>true</organismsDiffer>
    <experiments>4</experiments>
</comment>
<comment type="subcellular location">
    <subcellularLocation>
        <location evidence="4">Cytoplasm</location>
        <location evidence="4">Cytosol</location>
    </subcellularLocation>
    <subcellularLocation>
        <location evidence="4">Endoplasmic reticulum</location>
    </subcellularLocation>
    <subcellularLocation>
        <location evidence="4">Nucleus</location>
    </subcellularLocation>
    <subcellularLocation>
        <location evidence="4">Cytoplasm</location>
        <location evidence="4">Stress granule</location>
    </subcellularLocation>
    <subcellularLocation>
        <location evidence="19">Nucleus</location>
    </subcellularLocation>
    <text evidence="4">Recruited to the cytoplasmic surface of the endoplasmic reticulum via interaction with AMFR/gp78. Following DNA double-strand breaks, recruited to the sites of damage. Recruited to stalled replication forks via interaction with SPRTN. Recruited to damaged lysosomes decorated with K48-linked ubiquitin chains. Colocalizes with TIA1, ZFAND1 and G3BP1 in cytoplasmic stress granules (SGs) in response to arsenite-induced stress treatment (By similarity).</text>
</comment>
<comment type="tissue specificity">
    <text evidence="16">Expressed in the prefrontal cortex (at protein level).</text>
</comment>
<comment type="domain">
    <text>The N-terminal domain shows evolutionary conservation with that of PEX1, and is able to bind phospholipids with a preference for phosphatidylinositol mono- and bisphosphates.</text>
</comment>
<comment type="domain">
    <text evidence="4">The PIM (PUB-interaction motif) motif mediates interaction with the PUB domain of RNF31.</text>
</comment>
<comment type="PTM">
    <text evidence="3">Phosphorylated by tyrosine kinases in response to T-cell antigen receptor activation. Phosphorylated in mitotic cells.</text>
</comment>
<comment type="PTM">
    <text evidence="8">ISGylated.</text>
</comment>
<comment type="PTM">
    <text evidence="1">Methylation at Lys-315 catalyzed by VCPKMT is increased in the presence of ASPSCR1. Lys-315 methylation may decrease ATPase activity (By similarity).</text>
</comment>
<comment type="similarity">
    <text evidence="20">Belongs to the AAA ATPase family.</text>
</comment>